<gene>
    <name evidence="1" type="primary">ubiE</name>
    <name type="ordered locus">VP0095</name>
</gene>
<name>UBIE_VIBPA</name>
<evidence type="ECO:0000255" key="1">
    <source>
        <dbReference type="HAMAP-Rule" id="MF_01813"/>
    </source>
</evidence>
<proteinExistence type="inferred from homology"/>
<feature type="chain" id="PRO_0000193348" description="Ubiquinone/menaquinone biosynthesis C-methyltransferase UbiE">
    <location>
        <begin position="1"/>
        <end position="259"/>
    </location>
</feature>
<feature type="binding site" evidence="1">
    <location>
        <position position="82"/>
    </location>
    <ligand>
        <name>S-adenosyl-L-methionine</name>
        <dbReference type="ChEBI" id="CHEBI:59789"/>
    </ligand>
</feature>
<feature type="binding site" evidence="1">
    <location>
        <position position="103"/>
    </location>
    <ligand>
        <name>S-adenosyl-L-methionine</name>
        <dbReference type="ChEBI" id="CHEBI:59789"/>
    </ligand>
</feature>
<feature type="binding site" evidence="1">
    <location>
        <begin position="131"/>
        <end position="132"/>
    </location>
    <ligand>
        <name>S-adenosyl-L-methionine</name>
        <dbReference type="ChEBI" id="CHEBI:59789"/>
    </ligand>
</feature>
<feature type="binding site" evidence="1">
    <location>
        <position position="148"/>
    </location>
    <ligand>
        <name>S-adenosyl-L-methionine</name>
        <dbReference type="ChEBI" id="CHEBI:59789"/>
    </ligand>
</feature>
<keyword id="KW-0474">Menaquinone biosynthesis</keyword>
<keyword id="KW-0489">Methyltransferase</keyword>
<keyword id="KW-0949">S-adenosyl-L-methionine</keyword>
<keyword id="KW-0808">Transferase</keyword>
<keyword id="KW-0831">Ubiquinone biosynthesis</keyword>
<protein>
    <recommendedName>
        <fullName evidence="1">Ubiquinone/menaquinone biosynthesis C-methyltransferase UbiE</fullName>
        <ecNumber evidence="1">2.1.1.163</ecNumber>
        <ecNumber evidence="1">2.1.1.201</ecNumber>
    </recommendedName>
    <alternativeName>
        <fullName evidence="1">2-methoxy-6-polyprenyl-1,4-benzoquinol methylase</fullName>
    </alternativeName>
    <alternativeName>
        <fullName evidence="1">Demethylmenaquinone methyltransferase</fullName>
    </alternativeName>
</protein>
<reference key="1">
    <citation type="journal article" date="2003" name="Lancet">
        <title>Genome sequence of Vibrio parahaemolyticus: a pathogenic mechanism distinct from that of V. cholerae.</title>
        <authorList>
            <person name="Makino K."/>
            <person name="Oshima K."/>
            <person name="Kurokawa K."/>
            <person name="Yokoyama K."/>
            <person name="Uda T."/>
            <person name="Tagomori K."/>
            <person name="Iijima Y."/>
            <person name="Najima M."/>
            <person name="Nakano M."/>
            <person name="Yamashita A."/>
            <person name="Kubota Y."/>
            <person name="Kimura S."/>
            <person name="Yasunaga T."/>
            <person name="Honda T."/>
            <person name="Shinagawa H."/>
            <person name="Hattori M."/>
            <person name="Iida T."/>
        </authorList>
    </citation>
    <scope>NUCLEOTIDE SEQUENCE [LARGE SCALE GENOMIC DNA]</scope>
    <source>
        <strain>RIMD 2210633</strain>
    </source>
</reference>
<accession>Q87TH4</accession>
<sequence length="259" mass="28965">MTDTSLQSNTALENETTHFGFTTVAKEEKVTKVAEVFHSVAAKYDIMNDLMSGGIHRLWKRFTIDCSGARPGQRILDLGGGTGDLTAKFSRIVGDQGHVVLADINNSMLNVGRDKLRDNGIVGNVHYVQANAEELPFPDDYFDVITISFCLRNVTDKDKALRSMFRVLKPGGRLLVLEFSKPVLEPLSKVYDAYSFHLLPKMGELVANDAESYRYLAESIRMHPDQETLEGMMQDAGFENTKYYNLTGGIVALHRGYKF</sequence>
<comment type="function">
    <text evidence="1">Methyltransferase required for the conversion of demethylmenaquinol (DMKH2) to menaquinol (MKH2) and the conversion of 2-polyprenyl-6-methoxy-1,4-benzoquinol (DDMQH2) to 2-polyprenyl-3-methyl-6-methoxy-1,4-benzoquinol (DMQH2).</text>
</comment>
<comment type="catalytic activity">
    <reaction evidence="1">
        <text>a 2-demethylmenaquinol + S-adenosyl-L-methionine = a menaquinol + S-adenosyl-L-homocysteine + H(+)</text>
        <dbReference type="Rhea" id="RHEA:42640"/>
        <dbReference type="Rhea" id="RHEA-COMP:9539"/>
        <dbReference type="Rhea" id="RHEA-COMP:9563"/>
        <dbReference type="ChEBI" id="CHEBI:15378"/>
        <dbReference type="ChEBI" id="CHEBI:18151"/>
        <dbReference type="ChEBI" id="CHEBI:55437"/>
        <dbReference type="ChEBI" id="CHEBI:57856"/>
        <dbReference type="ChEBI" id="CHEBI:59789"/>
        <dbReference type="EC" id="2.1.1.163"/>
    </reaction>
</comment>
<comment type="catalytic activity">
    <reaction evidence="1">
        <text>a 2-methoxy-6-(all-trans-polyprenyl)benzene-1,4-diol + S-adenosyl-L-methionine = a 5-methoxy-2-methyl-3-(all-trans-polyprenyl)benzene-1,4-diol + S-adenosyl-L-homocysteine + H(+)</text>
        <dbReference type="Rhea" id="RHEA:28286"/>
        <dbReference type="Rhea" id="RHEA-COMP:10858"/>
        <dbReference type="Rhea" id="RHEA-COMP:10859"/>
        <dbReference type="ChEBI" id="CHEBI:15378"/>
        <dbReference type="ChEBI" id="CHEBI:57856"/>
        <dbReference type="ChEBI" id="CHEBI:59789"/>
        <dbReference type="ChEBI" id="CHEBI:84166"/>
        <dbReference type="ChEBI" id="CHEBI:84167"/>
        <dbReference type="EC" id="2.1.1.201"/>
    </reaction>
</comment>
<comment type="pathway">
    <text evidence="1">Quinol/quinone metabolism; menaquinone biosynthesis; menaquinol from 1,4-dihydroxy-2-naphthoate: step 2/2.</text>
</comment>
<comment type="pathway">
    <text evidence="1">Cofactor biosynthesis; ubiquinone biosynthesis.</text>
</comment>
<comment type="similarity">
    <text evidence="1">Belongs to the class I-like SAM-binding methyltransferase superfamily. MenG/UbiE family.</text>
</comment>
<organism>
    <name type="scientific">Vibrio parahaemolyticus serotype O3:K6 (strain RIMD 2210633)</name>
    <dbReference type="NCBI Taxonomy" id="223926"/>
    <lineage>
        <taxon>Bacteria</taxon>
        <taxon>Pseudomonadati</taxon>
        <taxon>Pseudomonadota</taxon>
        <taxon>Gammaproteobacteria</taxon>
        <taxon>Vibrionales</taxon>
        <taxon>Vibrionaceae</taxon>
        <taxon>Vibrio</taxon>
    </lineage>
</organism>
<dbReference type="EC" id="2.1.1.163" evidence="1"/>
<dbReference type="EC" id="2.1.1.201" evidence="1"/>
<dbReference type="EMBL" id="BA000031">
    <property type="protein sequence ID" value="BAC58358.1"/>
    <property type="molecule type" value="Genomic_DNA"/>
</dbReference>
<dbReference type="RefSeq" id="NP_796474.1">
    <property type="nucleotide sequence ID" value="NC_004603.1"/>
</dbReference>
<dbReference type="RefSeq" id="WP_005456853.1">
    <property type="nucleotide sequence ID" value="NC_004603.1"/>
</dbReference>
<dbReference type="SMR" id="Q87TH4"/>
<dbReference type="GeneID" id="1187562"/>
<dbReference type="KEGG" id="vpa:VP0095"/>
<dbReference type="PATRIC" id="fig|223926.6.peg.90"/>
<dbReference type="eggNOG" id="COG2226">
    <property type="taxonomic scope" value="Bacteria"/>
</dbReference>
<dbReference type="HOGENOM" id="CLU_037990_0_0_6"/>
<dbReference type="UniPathway" id="UPA00079">
    <property type="reaction ID" value="UER00169"/>
</dbReference>
<dbReference type="UniPathway" id="UPA00232"/>
<dbReference type="Proteomes" id="UP000002493">
    <property type="component" value="Chromosome 1"/>
</dbReference>
<dbReference type="GO" id="GO:0008425">
    <property type="term" value="F:2-methoxy-6-polyprenyl-1,4-benzoquinol methyltransferase activity"/>
    <property type="evidence" value="ECO:0007669"/>
    <property type="project" value="UniProtKB-UniRule"/>
</dbReference>
<dbReference type="GO" id="GO:0043770">
    <property type="term" value="F:demethylmenaquinone methyltransferase activity"/>
    <property type="evidence" value="ECO:0007669"/>
    <property type="project" value="UniProtKB-UniRule"/>
</dbReference>
<dbReference type="GO" id="GO:0009060">
    <property type="term" value="P:aerobic respiration"/>
    <property type="evidence" value="ECO:0007669"/>
    <property type="project" value="UniProtKB-UniRule"/>
</dbReference>
<dbReference type="GO" id="GO:0009234">
    <property type="term" value="P:menaquinone biosynthetic process"/>
    <property type="evidence" value="ECO:0007669"/>
    <property type="project" value="UniProtKB-UniRule"/>
</dbReference>
<dbReference type="GO" id="GO:0032259">
    <property type="term" value="P:methylation"/>
    <property type="evidence" value="ECO:0007669"/>
    <property type="project" value="UniProtKB-KW"/>
</dbReference>
<dbReference type="CDD" id="cd02440">
    <property type="entry name" value="AdoMet_MTases"/>
    <property type="match status" value="1"/>
</dbReference>
<dbReference type="FunFam" id="3.40.50.150:FF:000014">
    <property type="entry name" value="Ubiquinone/menaquinone biosynthesis C-methyltransferase UbiE"/>
    <property type="match status" value="1"/>
</dbReference>
<dbReference type="Gene3D" id="3.40.50.150">
    <property type="entry name" value="Vaccinia Virus protein VP39"/>
    <property type="match status" value="1"/>
</dbReference>
<dbReference type="HAMAP" id="MF_01813">
    <property type="entry name" value="MenG_UbiE_methyltr"/>
    <property type="match status" value="1"/>
</dbReference>
<dbReference type="InterPro" id="IPR029063">
    <property type="entry name" value="SAM-dependent_MTases_sf"/>
</dbReference>
<dbReference type="InterPro" id="IPR004033">
    <property type="entry name" value="UbiE/COQ5_MeTrFase"/>
</dbReference>
<dbReference type="InterPro" id="IPR023576">
    <property type="entry name" value="UbiE/COQ5_MeTrFase_CS"/>
</dbReference>
<dbReference type="NCBIfam" id="TIGR01934">
    <property type="entry name" value="MenG_MenH_UbiE"/>
    <property type="match status" value="1"/>
</dbReference>
<dbReference type="NCBIfam" id="NF001240">
    <property type="entry name" value="PRK00216.1-1"/>
    <property type="match status" value="1"/>
</dbReference>
<dbReference type="NCBIfam" id="NF001244">
    <property type="entry name" value="PRK00216.1-5"/>
    <property type="match status" value="1"/>
</dbReference>
<dbReference type="PANTHER" id="PTHR43591:SF24">
    <property type="entry name" value="2-METHOXY-6-POLYPRENYL-1,4-BENZOQUINOL METHYLASE, MITOCHONDRIAL"/>
    <property type="match status" value="1"/>
</dbReference>
<dbReference type="PANTHER" id="PTHR43591">
    <property type="entry name" value="METHYLTRANSFERASE"/>
    <property type="match status" value="1"/>
</dbReference>
<dbReference type="Pfam" id="PF01209">
    <property type="entry name" value="Ubie_methyltran"/>
    <property type="match status" value="1"/>
</dbReference>
<dbReference type="SUPFAM" id="SSF53335">
    <property type="entry name" value="S-adenosyl-L-methionine-dependent methyltransferases"/>
    <property type="match status" value="1"/>
</dbReference>
<dbReference type="PROSITE" id="PS51608">
    <property type="entry name" value="SAM_MT_UBIE"/>
    <property type="match status" value="1"/>
</dbReference>
<dbReference type="PROSITE" id="PS01183">
    <property type="entry name" value="UBIE_1"/>
    <property type="match status" value="1"/>
</dbReference>
<dbReference type="PROSITE" id="PS01184">
    <property type="entry name" value="UBIE_2"/>
    <property type="match status" value="1"/>
</dbReference>